<comment type="function">
    <text evidence="3">Catalyzes the formation of pyridoxal 5'-phosphate from ribose 5-phosphate (RBP), glyceraldehyde 3-phosphate (G3P) and ammonia. The ammonia is provided by Pdx2. Can also use ribulose 5-phosphate and dihydroxyacetone phosphate as substrates, resulting from enzyme-catalyzed isomerization of RBP and G3P, respectively.</text>
</comment>
<comment type="catalytic activity">
    <reaction evidence="3 5">
        <text>aldehydo-D-ribose 5-phosphate + D-glyceraldehyde 3-phosphate + L-glutamine = pyridoxal 5'-phosphate + L-glutamate + phosphate + 3 H2O + H(+)</text>
        <dbReference type="Rhea" id="RHEA:31507"/>
        <dbReference type="ChEBI" id="CHEBI:15377"/>
        <dbReference type="ChEBI" id="CHEBI:15378"/>
        <dbReference type="ChEBI" id="CHEBI:29985"/>
        <dbReference type="ChEBI" id="CHEBI:43474"/>
        <dbReference type="ChEBI" id="CHEBI:58273"/>
        <dbReference type="ChEBI" id="CHEBI:58359"/>
        <dbReference type="ChEBI" id="CHEBI:59776"/>
        <dbReference type="ChEBI" id="CHEBI:597326"/>
        <dbReference type="EC" id="4.3.3.6"/>
    </reaction>
</comment>
<comment type="pathway">
    <text>Cofactor biosynthesis; pyridoxal 5'-phosphate biosynthesis.</text>
</comment>
<comment type="subunit">
    <text evidence="4 5">Homohexamer and homododecamer. In the presence of Pdx2, forms a dodecamer of heterodimers.</text>
</comment>
<comment type="interaction">
    <interactant intactId="EBI-975011">
        <id>C6KT50</id>
    </interactant>
    <interactant intactId="EBI-975011">
        <id>C6KT50</id>
        <label>pdx1</label>
    </interactant>
    <organismsDiffer>false</organismsDiffer>
    <experiments>4</experiments>
</comment>
<comment type="subcellular location">
    <subcellularLocation>
        <location evidence="3">Cytoplasm</location>
    </subcellularLocation>
</comment>
<comment type="similarity">
    <text evidence="6">Belongs to the PdxS/SNZ family.</text>
</comment>
<organism>
    <name type="scientific">Plasmodium falciparum (isolate 3D7)</name>
    <dbReference type="NCBI Taxonomy" id="36329"/>
    <lineage>
        <taxon>Eukaryota</taxon>
        <taxon>Sar</taxon>
        <taxon>Alveolata</taxon>
        <taxon>Apicomplexa</taxon>
        <taxon>Aconoidasida</taxon>
        <taxon>Haemosporida</taxon>
        <taxon>Plasmodiidae</taxon>
        <taxon>Plasmodium</taxon>
        <taxon>Plasmodium (Laverania)</taxon>
    </lineage>
</organism>
<accession>C6KT50</accession>
<reference key="1">
    <citation type="journal article" date="2002" name="Nature">
        <title>Genome sequence of the human malaria parasite Plasmodium falciparum.</title>
        <authorList>
            <person name="Gardner M.J."/>
            <person name="Hall N."/>
            <person name="Fung E."/>
            <person name="White O."/>
            <person name="Berriman M."/>
            <person name="Hyman R.W."/>
            <person name="Carlton J.M."/>
            <person name="Pain A."/>
            <person name="Nelson K.E."/>
            <person name="Bowman S."/>
            <person name="Paulsen I.T."/>
            <person name="James K.D."/>
            <person name="Eisen J.A."/>
            <person name="Rutherford K.M."/>
            <person name="Salzberg S.L."/>
            <person name="Craig A."/>
            <person name="Kyes S."/>
            <person name="Chan M.-S."/>
            <person name="Nene V."/>
            <person name="Shallom S.J."/>
            <person name="Suh B."/>
            <person name="Peterson J."/>
            <person name="Angiuoli S."/>
            <person name="Pertea M."/>
            <person name="Allen J."/>
            <person name="Selengut J."/>
            <person name="Haft D."/>
            <person name="Mather M.W."/>
            <person name="Vaidya A.B."/>
            <person name="Martin D.M.A."/>
            <person name="Fairlamb A.H."/>
            <person name="Fraunholz M.J."/>
            <person name="Roos D.S."/>
            <person name="Ralph S.A."/>
            <person name="McFadden G.I."/>
            <person name="Cummings L.M."/>
            <person name="Subramanian G.M."/>
            <person name="Mungall C."/>
            <person name="Venter J.C."/>
            <person name="Carucci D.J."/>
            <person name="Hoffman S.L."/>
            <person name="Newbold C."/>
            <person name="Davis R.W."/>
            <person name="Fraser C.M."/>
            <person name="Barrell B.G."/>
        </authorList>
    </citation>
    <scope>NUCLEOTIDE SEQUENCE [LARGE SCALE GENOMIC DNA]</scope>
    <source>
        <strain evidence="8">3D7</strain>
    </source>
</reference>
<reference key="2">
    <citation type="journal article" date="2002" name="Nature">
        <title>Sequence of Plasmodium falciparum chromosomes 1, 3-9 and 13.</title>
        <authorList>
            <person name="Hall N."/>
            <person name="Pain A."/>
            <person name="Berriman M."/>
            <person name="Churcher C.M."/>
            <person name="Harris B."/>
            <person name="Harris D."/>
            <person name="Mungall K.L."/>
            <person name="Bowman S."/>
            <person name="Atkin R."/>
            <person name="Baker S."/>
            <person name="Barron A."/>
            <person name="Brooks K."/>
            <person name="Buckee C.O."/>
            <person name="Burrows C."/>
            <person name="Cherevach I."/>
            <person name="Chillingworth C."/>
            <person name="Chillingworth T."/>
            <person name="Christodoulou Z."/>
            <person name="Clark L."/>
            <person name="Clark R."/>
            <person name="Corton C."/>
            <person name="Cronin A."/>
            <person name="Davies R.M."/>
            <person name="Davis P."/>
            <person name="Dear P."/>
            <person name="Dearden F."/>
            <person name="Doggett J."/>
            <person name="Feltwell T."/>
            <person name="Goble A."/>
            <person name="Goodhead I."/>
            <person name="Gwilliam R."/>
            <person name="Hamlin N."/>
            <person name="Hance Z."/>
            <person name="Harper D."/>
            <person name="Hauser H."/>
            <person name="Hornsby T."/>
            <person name="Holroyd S."/>
            <person name="Horrocks P."/>
            <person name="Humphray S."/>
            <person name="Jagels K."/>
            <person name="James K.D."/>
            <person name="Johnson D."/>
            <person name="Kerhornou A."/>
            <person name="Knights A."/>
            <person name="Konfortov B."/>
            <person name="Kyes S."/>
            <person name="Larke N."/>
            <person name="Lawson D."/>
            <person name="Lennard N."/>
            <person name="Line A."/>
            <person name="Maddison M."/>
            <person name="Mclean J."/>
            <person name="Mooney P."/>
            <person name="Moule S."/>
            <person name="Murphy L."/>
            <person name="Oliver K."/>
            <person name="Ormond D."/>
            <person name="Price C."/>
            <person name="Quail M.A."/>
            <person name="Rabbinowitsch E."/>
            <person name="Rajandream M.A."/>
            <person name="Rutter S."/>
            <person name="Rutherford K.M."/>
            <person name="Sanders M."/>
            <person name="Simmonds M."/>
            <person name="Seeger K."/>
            <person name="Sharp S."/>
            <person name="Smith R."/>
            <person name="Squares R."/>
            <person name="Squares S."/>
            <person name="Stevens K."/>
            <person name="Taylor K."/>
            <person name="Tivey A."/>
            <person name="Unwin L."/>
            <person name="Whitehead S."/>
            <person name="Woodward J.R."/>
            <person name="Sulston J.E."/>
            <person name="Craig A."/>
            <person name="Newbold C."/>
            <person name="Barrell B.G."/>
        </authorList>
    </citation>
    <scope>NUCLEOTIDE SEQUENCE [LARGE SCALE GENOMIC DNA]</scope>
    <source>
        <strain>3D7</strain>
    </source>
</reference>
<reference key="3">
    <citation type="journal article" date="2006" name="J. Biol. Chem.">
        <title>Vitamin B6 biosynthesis by the malaria parasite Plasmodium falciparum: biochemical and structural insights.</title>
        <authorList>
            <person name="Gengenbacher M."/>
            <person name="Fitzpatrick T.B."/>
            <person name="Raschle T."/>
            <person name="Flicker K."/>
            <person name="Sinning I."/>
            <person name="Muller S."/>
            <person name="Macheroux P."/>
            <person name="Tews I."/>
            <person name="Kappes B."/>
        </authorList>
    </citation>
    <scope>FUNCTION</scope>
    <scope>CATALYTIC ACTIVITY</scope>
    <scope>SUBCELLULAR LOCATION</scope>
    <source>
        <strain>3D7</strain>
    </source>
</reference>
<reference key="4">
    <citation type="journal article" date="2008" name="PLoS ONE">
        <title>The assembly of the plasmodial PLP synthase complex follows a defined course.</title>
        <authorList>
            <person name="Mueller I.B."/>
            <person name="Knoeckel J."/>
            <person name="Groves M.R."/>
            <person name="Jordanova R."/>
            <person name="Ealick S.E."/>
            <person name="Walter R.D."/>
            <person name="Wrenger C."/>
        </authorList>
    </citation>
    <scope>MUTAGENESIS OF ASP-26; LYS-83; HIS-88; GLU-91; GLU-107; GLU-136; ARG-139; ARG-140 AND LYS-151</scope>
    <scope>SUBUNIT</scope>
    <source>
        <strain>3D7</strain>
    </source>
</reference>
<reference key="5">
    <citation type="journal article" date="2012" name="Structure">
        <title>Assembly of the eukaryotic PLP-synthase complex from Plasmodium and activation of the Pdx1 enzyme.</title>
        <authorList>
            <person name="Guedez G."/>
            <person name="Hipp K."/>
            <person name="Windeisen V."/>
            <person name="Derrer B."/>
            <person name="Gengenbacher M."/>
            <person name="Bottcher B."/>
            <person name="Sinning I."/>
            <person name="Kappes B."/>
            <person name="Tews I."/>
        </authorList>
    </citation>
    <scope>CATALYTIC ACTIVITY</scope>
    <scope>SUBUNIT</scope>
    <source>
        <strain>3D7</strain>
    </source>
</reference>
<keyword id="KW-0963">Cytoplasm</keyword>
<keyword id="KW-0456">Lyase</keyword>
<keyword id="KW-0663">Pyridoxal phosphate</keyword>
<keyword id="KW-1185">Reference proteome</keyword>
<keyword id="KW-0704">Schiff base</keyword>
<feature type="chain" id="PRO_0000431838" description="Pyridoxal 5'-phosphate synthase subunit Pdx1">
    <location>
        <begin position="1"/>
        <end position="301"/>
    </location>
</feature>
<feature type="active site" description="Schiff-base intermediate with D-ribose 5-phosphate" evidence="1">
    <location>
        <position position="83"/>
    </location>
</feature>
<feature type="binding site" evidence="1">
    <location>
        <position position="26"/>
    </location>
    <ligand>
        <name>D-ribose 5-phosphate</name>
        <dbReference type="ChEBI" id="CHEBI:78346"/>
    </ligand>
</feature>
<feature type="binding site" evidence="1">
    <location>
        <position position="155"/>
    </location>
    <ligand>
        <name>D-ribose 5-phosphate</name>
        <dbReference type="ChEBI" id="CHEBI:78346"/>
    </ligand>
</feature>
<feature type="binding site" evidence="2">
    <location>
        <position position="167"/>
    </location>
    <ligand>
        <name>D-glyceraldehyde 3-phosphate</name>
        <dbReference type="ChEBI" id="CHEBI:59776"/>
    </ligand>
</feature>
<feature type="binding site" evidence="1">
    <location>
        <position position="216"/>
    </location>
    <ligand>
        <name>D-ribose 5-phosphate</name>
        <dbReference type="ChEBI" id="CHEBI:78346"/>
    </ligand>
</feature>
<feature type="binding site" evidence="1">
    <location>
        <begin position="237"/>
        <end position="238"/>
    </location>
    <ligand>
        <name>D-ribose 5-phosphate</name>
        <dbReference type="ChEBI" id="CHEBI:78346"/>
    </ligand>
</feature>
<feature type="mutagenesis site" description="No activity." evidence="4">
    <original>D</original>
    <variation>A</variation>
    <location>
        <position position="26"/>
    </location>
</feature>
<feature type="mutagenesis site" description="No activity." evidence="4">
    <original>K</original>
    <variation>A</variation>
    <location>
        <position position="83"/>
    </location>
</feature>
<feature type="mutagenesis site" description="No activity. No complexes formed." evidence="4">
    <original>H</original>
    <variation>A</variation>
    <location>
        <position position="88"/>
    </location>
</feature>
<feature type="mutagenesis site" description="No activity. No complexes formed." evidence="4">
    <original>E</original>
    <variation>A</variation>
    <location>
        <position position="91"/>
    </location>
</feature>
<feature type="mutagenesis site" description="No effect." evidence="4">
    <original>E</original>
    <variation>A</variation>
    <location>
        <position position="107"/>
    </location>
</feature>
<feature type="mutagenesis site" description="No effect on dodecamer assembly. No activity; when associated with A-139 and A-140." evidence="4">
    <original>E</original>
    <variation>A</variation>
    <location>
        <position position="136"/>
    </location>
</feature>
<feature type="mutagenesis site" description="No activity; when associated with A-136 and A-140." evidence="4">
    <original>R</original>
    <variation>A</variation>
    <location>
        <position position="139"/>
    </location>
</feature>
<feature type="mutagenesis site" description="No activity; when associated with A-136 and A-139." evidence="4">
    <original>R</original>
    <variation>A</variation>
    <location>
        <position position="140"/>
    </location>
</feature>
<feature type="mutagenesis site" description="No activity. The mutant forms hexamers instead of dodecamers." evidence="4">
    <original>K</original>
    <variation>A</variation>
    <location>
        <position position="151"/>
    </location>
</feature>
<proteinExistence type="evidence at protein level"/>
<gene>
    <name type="primary">pdx1</name>
    <name evidence="7" type="ORF">PFF1025c</name>
</gene>
<sequence length="301" mass="33013">MENHKDDAVLLKHGWCEMLKGGVIMDVKSVEQAKIAEEAGAIGVMVLENIPSELRNKEGVARSVDPSKVEEIKKCVSINVLAKVRIGHFVEAQILEELKIDMIDESEVLTIADEMHHIDKHKFKTPFVCGCTNLGEALRRISEGASMIRTKGEAGTGNIIEAIKHIRTVNNEIKYLCSLSDSEVYHFAKKINAPIDLVLLTKKLKRLPVVNFAAGGVATPADAAMCMQLGMDGVFVGSGIFESENPRKMAASIVSAVSNFNNPKILLDVSMNLGKAMCGSTRVSDKWKNKNEEHTKFLTPQ</sequence>
<evidence type="ECO:0000250" key="1">
    <source>
        <dbReference type="UniProtKB" id="P0DMS0"/>
    </source>
</evidence>
<evidence type="ECO:0000250" key="2">
    <source>
        <dbReference type="UniProtKB" id="Q03148"/>
    </source>
</evidence>
<evidence type="ECO:0000269" key="3">
    <source>
    </source>
</evidence>
<evidence type="ECO:0000269" key="4">
    <source>
    </source>
</evidence>
<evidence type="ECO:0000269" key="5">
    <source>
    </source>
</evidence>
<evidence type="ECO:0000305" key="6"/>
<evidence type="ECO:0000312" key="7">
    <source>
        <dbReference type="EMBL" id="CAG25026.1"/>
    </source>
</evidence>
<evidence type="ECO:0000312" key="8">
    <source>
        <dbReference type="Proteomes" id="UP000001450"/>
    </source>
</evidence>
<name>PDX1_PLAF7</name>
<dbReference type="EC" id="4.3.3.6" evidence="3 5"/>
<dbReference type="EMBL" id="AL844505">
    <property type="protein sequence ID" value="CAG25026.1"/>
    <property type="molecule type" value="Genomic_DNA"/>
</dbReference>
<dbReference type="RefSeq" id="XP_966196.1">
    <property type="nucleotide sequence ID" value="XM_961103.1"/>
</dbReference>
<dbReference type="SMR" id="C6KT50"/>
<dbReference type="FunCoup" id="C6KT50">
    <property type="interactions" value="108"/>
</dbReference>
<dbReference type="IntAct" id="C6KT50">
    <property type="interactions" value="1"/>
</dbReference>
<dbReference type="MINT" id="C6KT50"/>
<dbReference type="STRING" id="36329.C6KT50"/>
<dbReference type="DrugBank" id="DB11638">
    <property type="generic name" value="Artenimol"/>
</dbReference>
<dbReference type="SwissPalm" id="C6KT50"/>
<dbReference type="PaxDb" id="5833-PFF1025c"/>
<dbReference type="EnsemblProtists" id="CAG25026">
    <property type="protein sequence ID" value="CAG25026"/>
    <property type="gene ID" value="PF3D7_0621200"/>
</dbReference>
<dbReference type="KEGG" id="pfa:PF3D7_0621200"/>
<dbReference type="VEuPathDB" id="PlasmoDB:PF3D7_0621200"/>
<dbReference type="HOGENOM" id="CLU_055352_1_0_1"/>
<dbReference type="InParanoid" id="C6KT50"/>
<dbReference type="OMA" id="RYANRGW"/>
<dbReference type="OrthoDB" id="1660966at2759"/>
<dbReference type="PhylomeDB" id="C6KT50"/>
<dbReference type="BRENDA" id="4.3.3.6">
    <property type="organism ID" value="4889"/>
</dbReference>
<dbReference type="UniPathway" id="UPA00245"/>
<dbReference type="Proteomes" id="UP000001450">
    <property type="component" value="Chromosome 6"/>
</dbReference>
<dbReference type="GO" id="GO:0005829">
    <property type="term" value="C:cytosol"/>
    <property type="evidence" value="ECO:0000304"/>
    <property type="project" value="GeneDB"/>
</dbReference>
<dbReference type="GO" id="GO:0016843">
    <property type="term" value="F:amine-lyase activity"/>
    <property type="evidence" value="ECO:0000318"/>
    <property type="project" value="GO_Central"/>
</dbReference>
<dbReference type="GO" id="GO:0003824">
    <property type="term" value="F:catalytic activity"/>
    <property type="evidence" value="ECO:0000250"/>
    <property type="project" value="GeneDB"/>
</dbReference>
<dbReference type="GO" id="GO:0004359">
    <property type="term" value="F:glutaminase activity"/>
    <property type="evidence" value="ECO:0000314"/>
    <property type="project" value="GeneDB"/>
</dbReference>
<dbReference type="GO" id="GO:0042802">
    <property type="term" value="F:identical protein binding"/>
    <property type="evidence" value="ECO:0000353"/>
    <property type="project" value="IntAct"/>
</dbReference>
<dbReference type="GO" id="GO:0036381">
    <property type="term" value="F:pyridoxal 5'-phosphate synthase (glutamine hydrolysing) activity"/>
    <property type="evidence" value="ECO:0007669"/>
    <property type="project" value="UniProtKB-EC"/>
</dbReference>
<dbReference type="GO" id="GO:0006520">
    <property type="term" value="P:amino acid metabolic process"/>
    <property type="evidence" value="ECO:0000318"/>
    <property type="project" value="GO_Central"/>
</dbReference>
<dbReference type="GO" id="GO:0042823">
    <property type="term" value="P:pyridoxal phosphate biosynthetic process"/>
    <property type="evidence" value="ECO:0000318"/>
    <property type="project" value="GO_Central"/>
</dbReference>
<dbReference type="GO" id="GO:0008615">
    <property type="term" value="P:pyridoxine biosynthetic process"/>
    <property type="evidence" value="ECO:0000250"/>
    <property type="project" value="GeneDB"/>
</dbReference>
<dbReference type="GO" id="GO:0000304">
    <property type="term" value="P:response to singlet oxygen"/>
    <property type="evidence" value="ECO:0000314"/>
    <property type="project" value="GeneDB"/>
</dbReference>
<dbReference type="GO" id="GO:0042819">
    <property type="term" value="P:vitamin B6 biosynthetic process"/>
    <property type="evidence" value="ECO:0000314"/>
    <property type="project" value="GeneDB"/>
</dbReference>
<dbReference type="CDD" id="cd04727">
    <property type="entry name" value="pdxS"/>
    <property type="match status" value="1"/>
</dbReference>
<dbReference type="FunFam" id="3.20.20.70:FF:000231">
    <property type="entry name" value="Pyridoxine biosynthetic enzyme pdx1"/>
    <property type="match status" value="1"/>
</dbReference>
<dbReference type="Gene3D" id="3.20.20.70">
    <property type="entry name" value="Aldolase class I"/>
    <property type="match status" value="1"/>
</dbReference>
<dbReference type="InterPro" id="IPR013785">
    <property type="entry name" value="Aldolase_TIM"/>
</dbReference>
<dbReference type="InterPro" id="IPR001852">
    <property type="entry name" value="PdxS/SNZ"/>
</dbReference>
<dbReference type="InterPro" id="IPR033755">
    <property type="entry name" value="PdxS/SNZ_N"/>
</dbReference>
<dbReference type="InterPro" id="IPR011060">
    <property type="entry name" value="RibuloseP-bd_barrel"/>
</dbReference>
<dbReference type="NCBIfam" id="NF003215">
    <property type="entry name" value="PRK04180.1"/>
    <property type="match status" value="1"/>
</dbReference>
<dbReference type="PANTHER" id="PTHR31829">
    <property type="entry name" value="PYRIDOXAL 5'-PHOSPHATE SYNTHASE SUBUNIT SNZ1-RELATED"/>
    <property type="match status" value="1"/>
</dbReference>
<dbReference type="PANTHER" id="PTHR31829:SF0">
    <property type="entry name" value="PYRIDOXAL 5'-PHOSPHATE SYNTHASE SUBUNIT SNZ1-RELATED"/>
    <property type="match status" value="1"/>
</dbReference>
<dbReference type="Pfam" id="PF01680">
    <property type="entry name" value="SOR_SNZ"/>
    <property type="match status" value="1"/>
</dbReference>
<dbReference type="PIRSF" id="PIRSF029271">
    <property type="entry name" value="Pdx1"/>
    <property type="match status" value="1"/>
</dbReference>
<dbReference type="SUPFAM" id="SSF51366">
    <property type="entry name" value="Ribulose-phoshate binding barrel"/>
    <property type="match status" value="1"/>
</dbReference>
<dbReference type="PROSITE" id="PS01235">
    <property type="entry name" value="PDXS_SNZ_1"/>
    <property type="match status" value="1"/>
</dbReference>
<dbReference type="PROSITE" id="PS51129">
    <property type="entry name" value="PDXS_SNZ_2"/>
    <property type="match status" value="1"/>
</dbReference>
<protein>
    <recommendedName>
        <fullName>Pyridoxal 5'-phosphate synthase subunit Pdx1</fullName>
        <shortName>PLP synthase subunit Pdx1</shortName>
        <ecNumber evidence="3 5">4.3.3.6</ecNumber>
    </recommendedName>
</protein>